<keyword id="KW-0030">Aminoacyl-tRNA synthetase</keyword>
<keyword id="KW-0067">ATP-binding</keyword>
<keyword id="KW-0963">Cytoplasm</keyword>
<keyword id="KW-0436">Ligase</keyword>
<keyword id="KW-0547">Nucleotide-binding</keyword>
<keyword id="KW-0648">Protein biosynthesis</keyword>
<keyword id="KW-1185">Reference proteome</keyword>
<dbReference type="EC" id="6.1.1.23" evidence="1"/>
<dbReference type="EMBL" id="CP000115">
    <property type="protein sequence ID" value="ABA04849.1"/>
    <property type="molecule type" value="Genomic_DNA"/>
</dbReference>
<dbReference type="RefSeq" id="WP_011314855.1">
    <property type="nucleotide sequence ID" value="NC_007406.1"/>
</dbReference>
<dbReference type="SMR" id="Q3SS92"/>
<dbReference type="STRING" id="323098.Nwi_1588"/>
<dbReference type="KEGG" id="nwi:Nwi_1588"/>
<dbReference type="eggNOG" id="COG0173">
    <property type="taxonomic scope" value="Bacteria"/>
</dbReference>
<dbReference type="HOGENOM" id="CLU_014330_3_2_5"/>
<dbReference type="OrthoDB" id="9802326at2"/>
<dbReference type="Proteomes" id="UP000002531">
    <property type="component" value="Chromosome"/>
</dbReference>
<dbReference type="GO" id="GO:0005737">
    <property type="term" value="C:cytoplasm"/>
    <property type="evidence" value="ECO:0007669"/>
    <property type="project" value="UniProtKB-SubCell"/>
</dbReference>
<dbReference type="GO" id="GO:0004815">
    <property type="term" value="F:aspartate-tRNA ligase activity"/>
    <property type="evidence" value="ECO:0007669"/>
    <property type="project" value="UniProtKB-UniRule"/>
</dbReference>
<dbReference type="GO" id="GO:0050560">
    <property type="term" value="F:aspartate-tRNA(Asn) ligase activity"/>
    <property type="evidence" value="ECO:0007669"/>
    <property type="project" value="UniProtKB-EC"/>
</dbReference>
<dbReference type="GO" id="GO:0005524">
    <property type="term" value="F:ATP binding"/>
    <property type="evidence" value="ECO:0007669"/>
    <property type="project" value="UniProtKB-UniRule"/>
</dbReference>
<dbReference type="GO" id="GO:0003676">
    <property type="term" value="F:nucleic acid binding"/>
    <property type="evidence" value="ECO:0007669"/>
    <property type="project" value="InterPro"/>
</dbReference>
<dbReference type="GO" id="GO:0006422">
    <property type="term" value="P:aspartyl-tRNA aminoacylation"/>
    <property type="evidence" value="ECO:0007669"/>
    <property type="project" value="UniProtKB-UniRule"/>
</dbReference>
<dbReference type="CDD" id="cd00777">
    <property type="entry name" value="AspRS_core"/>
    <property type="match status" value="1"/>
</dbReference>
<dbReference type="CDD" id="cd04317">
    <property type="entry name" value="EcAspRS_like_N"/>
    <property type="match status" value="1"/>
</dbReference>
<dbReference type="Gene3D" id="3.30.930.10">
    <property type="entry name" value="Bira Bifunctional Protein, Domain 2"/>
    <property type="match status" value="1"/>
</dbReference>
<dbReference type="Gene3D" id="3.30.1360.30">
    <property type="entry name" value="GAD-like domain"/>
    <property type="match status" value="1"/>
</dbReference>
<dbReference type="Gene3D" id="2.40.50.140">
    <property type="entry name" value="Nucleic acid-binding proteins"/>
    <property type="match status" value="1"/>
</dbReference>
<dbReference type="HAMAP" id="MF_00044">
    <property type="entry name" value="Asp_tRNA_synth_type1"/>
    <property type="match status" value="1"/>
</dbReference>
<dbReference type="InterPro" id="IPR004364">
    <property type="entry name" value="Aa-tRNA-synt_II"/>
</dbReference>
<dbReference type="InterPro" id="IPR006195">
    <property type="entry name" value="aa-tRNA-synth_II"/>
</dbReference>
<dbReference type="InterPro" id="IPR045864">
    <property type="entry name" value="aa-tRNA-synth_II/BPL/LPL"/>
</dbReference>
<dbReference type="InterPro" id="IPR004524">
    <property type="entry name" value="Asp-tRNA-ligase_1"/>
</dbReference>
<dbReference type="InterPro" id="IPR047089">
    <property type="entry name" value="Asp-tRNA-ligase_1_N"/>
</dbReference>
<dbReference type="InterPro" id="IPR002312">
    <property type="entry name" value="Asp/Asn-tRNA-synth_IIb"/>
</dbReference>
<dbReference type="InterPro" id="IPR047090">
    <property type="entry name" value="AspRS_core"/>
</dbReference>
<dbReference type="InterPro" id="IPR004115">
    <property type="entry name" value="GAD-like_sf"/>
</dbReference>
<dbReference type="InterPro" id="IPR029351">
    <property type="entry name" value="GAD_dom"/>
</dbReference>
<dbReference type="InterPro" id="IPR012340">
    <property type="entry name" value="NA-bd_OB-fold"/>
</dbReference>
<dbReference type="InterPro" id="IPR004365">
    <property type="entry name" value="NA-bd_OB_tRNA"/>
</dbReference>
<dbReference type="NCBIfam" id="TIGR00459">
    <property type="entry name" value="aspS_bact"/>
    <property type="match status" value="1"/>
</dbReference>
<dbReference type="NCBIfam" id="NF001750">
    <property type="entry name" value="PRK00476.1"/>
    <property type="match status" value="1"/>
</dbReference>
<dbReference type="PANTHER" id="PTHR22594:SF5">
    <property type="entry name" value="ASPARTATE--TRNA LIGASE, MITOCHONDRIAL"/>
    <property type="match status" value="1"/>
</dbReference>
<dbReference type="PANTHER" id="PTHR22594">
    <property type="entry name" value="ASPARTYL/LYSYL-TRNA SYNTHETASE"/>
    <property type="match status" value="1"/>
</dbReference>
<dbReference type="Pfam" id="PF02938">
    <property type="entry name" value="GAD"/>
    <property type="match status" value="1"/>
</dbReference>
<dbReference type="Pfam" id="PF00152">
    <property type="entry name" value="tRNA-synt_2"/>
    <property type="match status" value="1"/>
</dbReference>
<dbReference type="Pfam" id="PF01336">
    <property type="entry name" value="tRNA_anti-codon"/>
    <property type="match status" value="1"/>
</dbReference>
<dbReference type="PRINTS" id="PR01042">
    <property type="entry name" value="TRNASYNTHASP"/>
</dbReference>
<dbReference type="SUPFAM" id="SSF55681">
    <property type="entry name" value="Class II aaRS and biotin synthetases"/>
    <property type="match status" value="1"/>
</dbReference>
<dbReference type="SUPFAM" id="SSF55261">
    <property type="entry name" value="GAD domain-like"/>
    <property type="match status" value="1"/>
</dbReference>
<dbReference type="SUPFAM" id="SSF50249">
    <property type="entry name" value="Nucleic acid-binding proteins"/>
    <property type="match status" value="1"/>
</dbReference>
<dbReference type="PROSITE" id="PS50862">
    <property type="entry name" value="AA_TRNA_LIGASE_II"/>
    <property type="match status" value="1"/>
</dbReference>
<feature type="chain" id="PRO_0000235535" description="Aspartate--tRNA(Asp/Asn) ligase">
    <location>
        <begin position="1"/>
        <end position="590"/>
    </location>
</feature>
<feature type="region of interest" description="Aspartate" evidence="1">
    <location>
        <begin position="199"/>
        <end position="202"/>
    </location>
</feature>
<feature type="binding site" evidence="1">
    <location>
        <position position="175"/>
    </location>
    <ligand>
        <name>L-aspartate</name>
        <dbReference type="ChEBI" id="CHEBI:29991"/>
    </ligand>
</feature>
<feature type="binding site" evidence="1">
    <location>
        <begin position="221"/>
        <end position="223"/>
    </location>
    <ligand>
        <name>ATP</name>
        <dbReference type="ChEBI" id="CHEBI:30616"/>
    </ligand>
</feature>
<feature type="binding site" evidence="1">
    <location>
        <position position="221"/>
    </location>
    <ligand>
        <name>L-aspartate</name>
        <dbReference type="ChEBI" id="CHEBI:29991"/>
    </ligand>
</feature>
<feature type="binding site" evidence="1">
    <location>
        <position position="450"/>
    </location>
    <ligand>
        <name>L-aspartate</name>
        <dbReference type="ChEBI" id="CHEBI:29991"/>
    </ligand>
</feature>
<feature type="binding site" evidence="1">
    <location>
        <position position="484"/>
    </location>
    <ligand>
        <name>ATP</name>
        <dbReference type="ChEBI" id="CHEBI:30616"/>
    </ligand>
</feature>
<feature type="binding site" evidence="1">
    <location>
        <position position="491"/>
    </location>
    <ligand>
        <name>L-aspartate</name>
        <dbReference type="ChEBI" id="CHEBI:29991"/>
    </ligand>
</feature>
<feature type="binding site" evidence="1">
    <location>
        <begin position="536"/>
        <end position="539"/>
    </location>
    <ligand>
        <name>ATP</name>
        <dbReference type="ChEBI" id="CHEBI:30616"/>
    </ligand>
</feature>
<feature type="site" description="Important for tRNA non-discrimination" evidence="1">
    <location>
        <position position="33"/>
    </location>
</feature>
<feature type="site" description="Important for tRNA non-discrimination" evidence="1">
    <location>
        <position position="83"/>
    </location>
</feature>
<accession>Q3SS92</accession>
<protein>
    <recommendedName>
        <fullName evidence="1">Aspartate--tRNA(Asp/Asn) ligase</fullName>
        <ecNumber evidence="1">6.1.1.23</ecNumber>
    </recommendedName>
    <alternativeName>
        <fullName evidence="1">Aspartyl-tRNA synthetase</fullName>
        <shortName evidence="1">AspRS</shortName>
    </alternativeName>
    <alternativeName>
        <fullName evidence="1">Non-discriminating aspartyl-tRNA synthetase</fullName>
        <shortName evidence="1">ND-AspRS</shortName>
    </alternativeName>
</protein>
<gene>
    <name evidence="1" type="primary">aspS</name>
    <name type="ordered locus">Nwi_1588</name>
</gene>
<organism>
    <name type="scientific">Nitrobacter winogradskyi (strain ATCC 25391 / DSM 10237 / CIP 104748 / NCIMB 11846 / Nb-255)</name>
    <dbReference type="NCBI Taxonomy" id="323098"/>
    <lineage>
        <taxon>Bacteria</taxon>
        <taxon>Pseudomonadati</taxon>
        <taxon>Pseudomonadota</taxon>
        <taxon>Alphaproteobacteria</taxon>
        <taxon>Hyphomicrobiales</taxon>
        <taxon>Nitrobacteraceae</taxon>
        <taxon>Nitrobacter</taxon>
    </lineage>
</organism>
<comment type="function">
    <text evidence="1">Aspartyl-tRNA synthetase with relaxed tRNA specificity since it is able to aspartylate not only its cognate tRNA(Asp) but also tRNA(Asn). Reaction proceeds in two steps: L-aspartate is first activated by ATP to form Asp-AMP and then transferred to the acceptor end of tRNA(Asp/Asn).</text>
</comment>
<comment type="catalytic activity">
    <reaction evidence="1">
        <text>tRNA(Asx) + L-aspartate + ATP = L-aspartyl-tRNA(Asx) + AMP + diphosphate</text>
        <dbReference type="Rhea" id="RHEA:18349"/>
        <dbReference type="Rhea" id="RHEA-COMP:9710"/>
        <dbReference type="Rhea" id="RHEA-COMP:9711"/>
        <dbReference type="ChEBI" id="CHEBI:29991"/>
        <dbReference type="ChEBI" id="CHEBI:30616"/>
        <dbReference type="ChEBI" id="CHEBI:33019"/>
        <dbReference type="ChEBI" id="CHEBI:78442"/>
        <dbReference type="ChEBI" id="CHEBI:78516"/>
        <dbReference type="ChEBI" id="CHEBI:456215"/>
        <dbReference type="EC" id="6.1.1.23"/>
    </reaction>
</comment>
<comment type="subunit">
    <text evidence="1">Homodimer.</text>
</comment>
<comment type="subcellular location">
    <subcellularLocation>
        <location evidence="1">Cytoplasm</location>
    </subcellularLocation>
</comment>
<comment type="similarity">
    <text evidence="1">Belongs to the class-II aminoacyl-tRNA synthetase family. Type 1 subfamily.</text>
</comment>
<name>SYDND_NITWN</name>
<proteinExistence type="inferred from homology"/>
<sequence length="590" mass="66704">MHRYRSHTCGALRDSHIDQTVRLSGWCHRIRDHGGVLFIDLRDHYGLTQCVADPDSPAFALAEKLRSEWVVRIDGKARRRPAGTENPELPTGDVEIYVTEIEVLGPAAELPLPVFGEQEYPEDIRLKYRFLDLRRENLHQNIMTRGAIVDSMRKRMKEQGFFEFQTPILTASSPEGARDFLVPSRIHPGKFYALPQAPQQYKQLLMMSGFDRYFQIAPCFRDEDPRADRLPGEFYQLDLEMSFVEQDDVFAAVEPVITGVFEEFAKGKPVTRNWPRIPFAESLRKYGTDKPDLRNPLLMQDVSEHFRGSGFKVFARMLEDSKNQVWAIPGPGGGSRAFCDRMNSWAQGEGQPGLGYIMWREGGEGAGPLANNIGPERTEAIRVQLGLKAGDAAFFVAGDPAKFWKFAGLARTRLGEELNLIDKDRFELAWIVDFPMYEYNEEDKKVDFSHNPFSMPQGGLDALNTQDPLTIKAFQYDITCNGYEIASGGIRNHRPEAMVKAFEIAGYGENDVVERFGGMYRAFQYGAPPHGGMAAGVDRIVMLLCGTNNLREISLFPMNQRAEDLLMGAPSEVAPKQLRELHIRLNLPQN</sequence>
<evidence type="ECO:0000255" key="1">
    <source>
        <dbReference type="HAMAP-Rule" id="MF_00044"/>
    </source>
</evidence>
<reference key="1">
    <citation type="journal article" date="2006" name="Appl. Environ. Microbiol.">
        <title>Genome sequence of the chemolithoautotrophic nitrite-oxidizing bacterium Nitrobacter winogradskyi Nb-255.</title>
        <authorList>
            <person name="Starkenburg S.R."/>
            <person name="Chain P.S.G."/>
            <person name="Sayavedra-Soto L.A."/>
            <person name="Hauser L."/>
            <person name="Land M.L."/>
            <person name="Larimer F.W."/>
            <person name="Malfatti S.A."/>
            <person name="Klotz M.G."/>
            <person name="Bottomley P.J."/>
            <person name="Arp D.J."/>
            <person name="Hickey W.J."/>
        </authorList>
    </citation>
    <scope>NUCLEOTIDE SEQUENCE [LARGE SCALE GENOMIC DNA]</scope>
    <source>
        <strain>ATCC 25391 / DSM 10237 / CIP 104748 / NCIMB 11846 / Nb-255</strain>
    </source>
</reference>